<reference key="1">
    <citation type="journal article" date="2011" name="BMC Genomics">
        <title>Complete genome sequence of the filamentous anoxygenic phototrophic bacterium Chloroflexus aurantiacus.</title>
        <authorList>
            <person name="Tang K.H."/>
            <person name="Barry K."/>
            <person name="Chertkov O."/>
            <person name="Dalin E."/>
            <person name="Han C.S."/>
            <person name="Hauser L.J."/>
            <person name="Honchak B.M."/>
            <person name="Karbach L.E."/>
            <person name="Land M.L."/>
            <person name="Lapidus A."/>
            <person name="Larimer F.W."/>
            <person name="Mikhailova N."/>
            <person name="Pitluck S."/>
            <person name="Pierson B.K."/>
            <person name="Blankenship R.E."/>
        </authorList>
    </citation>
    <scope>NUCLEOTIDE SEQUENCE [LARGE SCALE GENOMIC DNA]</scope>
    <source>
        <strain>ATCC 29366 / DSM 635 / J-10-fl</strain>
    </source>
</reference>
<protein>
    <recommendedName>
        <fullName evidence="2">Translation initiation factor IF-2</fullName>
    </recommendedName>
</protein>
<keyword id="KW-0963">Cytoplasm</keyword>
<keyword id="KW-0342">GTP-binding</keyword>
<keyword id="KW-0396">Initiation factor</keyword>
<keyword id="KW-0547">Nucleotide-binding</keyword>
<keyword id="KW-0648">Protein biosynthesis</keyword>
<keyword id="KW-1185">Reference proteome</keyword>
<feature type="chain" id="PRO_0000335463" description="Translation initiation factor IF-2">
    <location>
        <begin position="1"/>
        <end position="745"/>
    </location>
</feature>
<feature type="domain" description="tr-type G">
    <location>
        <begin position="241"/>
        <end position="410"/>
    </location>
</feature>
<feature type="region of interest" description="Disordered" evidence="3">
    <location>
        <begin position="1"/>
        <end position="154"/>
    </location>
</feature>
<feature type="region of interest" description="G1" evidence="1">
    <location>
        <begin position="250"/>
        <end position="257"/>
    </location>
</feature>
<feature type="region of interest" description="G2" evidence="1">
    <location>
        <begin position="275"/>
        <end position="279"/>
    </location>
</feature>
<feature type="region of interest" description="G3" evidence="1">
    <location>
        <begin position="296"/>
        <end position="299"/>
    </location>
</feature>
<feature type="region of interest" description="G4" evidence="1">
    <location>
        <begin position="350"/>
        <end position="353"/>
    </location>
</feature>
<feature type="region of interest" description="G5" evidence="1">
    <location>
        <begin position="386"/>
        <end position="388"/>
    </location>
</feature>
<feature type="compositionally biased region" description="Polar residues" evidence="3">
    <location>
        <begin position="36"/>
        <end position="56"/>
    </location>
</feature>
<feature type="compositionally biased region" description="Low complexity" evidence="3">
    <location>
        <begin position="68"/>
        <end position="98"/>
    </location>
</feature>
<feature type="compositionally biased region" description="Gly residues" evidence="3">
    <location>
        <begin position="99"/>
        <end position="113"/>
    </location>
</feature>
<feature type="compositionally biased region" description="Low complexity" evidence="3">
    <location>
        <begin position="114"/>
        <end position="126"/>
    </location>
</feature>
<feature type="compositionally biased region" description="Basic and acidic residues" evidence="3">
    <location>
        <begin position="127"/>
        <end position="138"/>
    </location>
</feature>
<feature type="binding site" evidence="2">
    <location>
        <begin position="250"/>
        <end position="257"/>
    </location>
    <ligand>
        <name>GTP</name>
        <dbReference type="ChEBI" id="CHEBI:37565"/>
    </ligand>
</feature>
<feature type="binding site" evidence="2">
    <location>
        <begin position="296"/>
        <end position="300"/>
    </location>
    <ligand>
        <name>GTP</name>
        <dbReference type="ChEBI" id="CHEBI:37565"/>
    </ligand>
</feature>
<feature type="binding site" evidence="2">
    <location>
        <begin position="350"/>
        <end position="353"/>
    </location>
    <ligand>
        <name>GTP</name>
        <dbReference type="ChEBI" id="CHEBI:37565"/>
    </ligand>
</feature>
<accession>A9WGP6</accession>
<organism>
    <name type="scientific">Chloroflexus aurantiacus (strain ATCC 29366 / DSM 635 / J-10-fl)</name>
    <dbReference type="NCBI Taxonomy" id="324602"/>
    <lineage>
        <taxon>Bacteria</taxon>
        <taxon>Bacillati</taxon>
        <taxon>Chloroflexota</taxon>
        <taxon>Chloroflexia</taxon>
        <taxon>Chloroflexales</taxon>
        <taxon>Chloroflexineae</taxon>
        <taxon>Chloroflexaceae</taxon>
        <taxon>Chloroflexus</taxon>
    </lineage>
</organism>
<proteinExistence type="inferred from homology"/>
<comment type="function">
    <text evidence="2">One of the essential components for the initiation of protein synthesis. Protects formylmethionyl-tRNA from spontaneous hydrolysis and promotes its binding to the 30S ribosomal subunits. Also involved in the hydrolysis of GTP during the formation of the 70S ribosomal complex.</text>
</comment>
<comment type="subcellular location">
    <subcellularLocation>
        <location evidence="2">Cytoplasm</location>
    </subcellularLocation>
</comment>
<comment type="similarity">
    <text evidence="2">Belongs to the TRAFAC class translation factor GTPase superfamily. Classic translation factor GTPase family. IF-2 subfamily.</text>
</comment>
<evidence type="ECO:0000250" key="1"/>
<evidence type="ECO:0000255" key="2">
    <source>
        <dbReference type="HAMAP-Rule" id="MF_00100"/>
    </source>
</evidence>
<evidence type="ECO:0000256" key="3">
    <source>
        <dbReference type="SAM" id="MobiDB-lite"/>
    </source>
</evidence>
<name>IF2_CHLAA</name>
<gene>
    <name evidence="2" type="primary">infB</name>
    <name type="ordered locus">Caur_3013</name>
</gene>
<dbReference type="EMBL" id="CP000909">
    <property type="protein sequence ID" value="ABY36212.1"/>
    <property type="molecule type" value="Genomic_DNA"/>
</dbReference>
<dbReference type="RefSeq" id="WP_012258865.1">
    <property type="nucleotide sequence ID" value="NC_010175.1"/>
</dbReference>
<dbReference type="RefSeq" id="YP_001636601.1">
    <property type="nucleotide sequence ID" value="NC_010175.1"/>
</dbReference>
<dbReference type="SMR" id="A9WGP6"/>
<dbReference type="FunCoup" id="A9WGP6">
    <property type="interactions" value="483"/>
</dbReference>
<dbReference type="STRING" id="324602.Caur_3013"/>
<dbReference type="EnsemblBacteria" id="ABY36212">
    <property type="protein sequence ID" value="ABY36212"/>
    <property type="gene ID" value="Caur_3013"/>
</dbReference>
<dbReference type="KEGG" id="cau:Caur_3013"/>
<dbReference type="PATRIC" id="fig|324602.8.peg.3414"/>
<dbReference type="eggNOG" id="COG0532">
    <property type="taxonomic scope" value="Bacteria"/>
</dbReference>
<dbReference type="HOGENOM" id="CLU_006301_5_1_0"/>
<dbReference type="InParanoid" id="A9WGP6"/>
<dbReference type="Proteomes" id="UP000002008">
    <property type="component" value="Chromosome"/>
</dbReference>
<dbReference type="GO" id="GO:0005737">
    <property type="term" value="C:cytoplasm"/>
    <property type="evidence" value="ECO:0000318"/>
    <property type="project" value="GO_Central"/>
</dbReference>
<dbReference type="GO" id="GO:0005829">
    <property type="term" value="C:cytosol"/>
    <property type="evidence" value="ECO:0000318"/>
    <property type="project" value="GO_Central"/>
</dbReference>
<dbReference type="GO" id="GO:0005525">
    <property type="term" value="F:GTP binding"/>
    <property type="evidence" value="ECO:0007669"/>
    <property type="project" value="UniProtKB-KW"/>
</dbReference>
<dbReference type="GO" id="GO:0003924">
    <property type="term" value="F:GTPase activity"/>
    <property type="evidence" value="ECO:0007669"/>
    <property type="project" value="UniProtKB-UniRule"/>
</dbReference>
<dbReference type="GO" id="GO:0003743">
    <property type="term" value="F:translation initiation factor activity"/>
    <property type="evidence" value="ECO:0000318"/>
    <property type="project" value="GO_Central"/>
</dbReference>
<dbReference type="GO" id="GO:0006413">
    <property type="term" value="P:translational initiation"/>
    <property type="evidence" value="ECO:0000318"/>
    <property type="project" value="GO_Central"/>
</dbReference>
<dbReference type="CDD" id="cd01887">
    <property type="entry name" value="IF2_eIF5B"/>
    <property type="match status" value="1"/>
</dbReference>
<dbReference type="CDD" id="cd03702">
    <property type="entry name" value="IF2_mtIF2_II"/>
    <property type="match status" value="1"/>
</dbReference>
<dbReference type="CDD" id="cd03692">
    <property type="entry name" value="mtIF2_IVc"/>
    <property type="match status" value="1"/>
</dbReference>
<dbReference type="FunFam" id="2.40.30.10:FF:000008">
    <property type="entry name" value="Translation initiation factor IF-2"/>
    <property type="match status" value="1"/>
</dbReference>
<dbReference type="FunFam" id="2.40.30.10:FF:000054">
    <property type="entry name" value="Translation initiation factor IF-2"/>
    <property type="match status" value="1"/>
</dbReference>
<dbReference type="FunFam" id="3.40.50.10050:FF:000001">
    <property type="entry name" value="Translation initiation factor IF-2"/>
    <property type="match status" value="1"/>
</dbReference>
<dbReference type="FunFam" id="3.40.50.300:FF:000019">
    <property type="entry name" value="Translation initiation factor IF-2"/>
    <property type="match status" value="1"/>
</dbReference>
<dbReference type="Gene3D" id="3.40.50.300">
    <property type="entry name" value="P-loop containing nucleotide triphosphate hydrolases"/>
    <property type="match status" value="1"/>
</dbReference>
<dbReference type="Gene3D" id="2.40.30.10">
    <property type="entry name" value="Translation factors"/>
    <property type="match status" value="2"/>
</dbReference>
<dbReference type="Gene3D" id="3.40.50.10050">
    <property type="entry name" value="Translation initiation factor IF- 2, domain 3"/>
    <property type="match status" value="1"/>
</dbReference>
<dbReference type="HAMAP" id="MF_00100_B">
    <property type="entry name" value="IF_2_B"/>
    <property type="match status" value="1"/>
</dbReference>
<dbReference type="InterPro" id="IPR053905">
    <property type="entry name" value="EF-G-like_DII"/>
</dbReference>
<dbReference type="InterPro" id="IPR004161">
    <property type="entry name" value="EFTu-like_2"/>
</dbReference>
<dbReference type="InterPro" id="IPR044145">
    <property type="entry name" value="IF2_II"/>
</dbReference>
<dbReference type="InterPro" id="IPR006847">
    <property type="entry name" value="IF2_N"/>
</dbReference>
<dbReference type="InterPro" id="IPR027417">
    <property type="entry name" value="P-loop_NTPase"/>
</dbReference>
<dbReference type="InterPro" id="IPR005225">
    <property type="entry name" value="Small_GTP-bd"/>
</dbReference>
<dbReference type="InterPro" id="IPR000795">
    <property type="entry name" value="T_Tr_GTP-bd_dom"/>
</dbReference>
<dbReference type="InterPro" id="IPR000178">
    <property type="entry name" value="TF_IF2_bacterial-like"/>
</dbReference>
<dbReference type="InterPro" id="IPR015760">
    <property type="entry name" value="TIF_IF2"/>
</dbReference>
<dbReference type="InterPro" id="IPR023115">
    <property type="entry name" value="TIF_IF2_dom3"/>
</dbReference>
<dbReference type="InterPro" id="IPR036925">
    <property type="entry name" value="TIF_IF2_dom3_sf"/>
</dbReference>
<dbReference type="InterPro" id="IPR009000">
    <property type="entry name" value="Transl_B-barrel_sf"/>
</dbReference>
<dbReference type="NCBIfam" id="TIGR00487">
    <property type="entry name" value="IF-2"/>
    <property type="match status" value="1"/>
</dbReference>
<dbReference type="NCBIfam" id="TIGR00231">
    <property type="entry name" value="small_GTP"/>
    <property type="match status" value="1"/>
</dbReference>
<dbReference type="PANTHER" id="PTHR43381:SF5">
    <property type="entry name" value="TR-TYPE G DOMAIN-CONTAINING PROTEIN"/>
    <property type="match status" value="1"/>
</dbReference>
<dbReference type="PANTHER" id="PTHR43381">
    <property type="entry name" value="TRANSLATION INITIATION FACTOR IF-2-RELATED"/>
    <property type="match status" value="1"/>
</dbReference>
<dbReference type="Pfam" id="PF22042">
    <property type="entry name" value="EF-G_D2"/>
    <property type="match status" value="1"/>
</dbReference>
<dbReference type="Pfam" id="PF00009">
    <property type="entry name" value="GTP_EFTU"/>
    <property type="match status" value="1"/>
</dbReference>
<dbReference type="Pfam" id="PF03144">
    <property type="entry name" value="GTP_EFTU_D2"/>
    <property type="match status" value="1"/>
</dbReference>
<dbReference type="Pfam" id="PF11987">
    <property type="entry name" value="IF-2"/>
    <property type="match status" value="1"/>
</dbReference>
<dbReference type="Pfam" id="PF04760">
    <property type="entry name" value="IF2_N"/>
    <property type="match status" value="1"/>
</dbReference>
<dbReference type="SUPFAM" id="SSF52156">
    <property type="entry name" value="Initiation factor IF2/eIF5b, domain 3"/>
    <property type="match status" value="1"/>
</dbReference>
<dbReference type="SUPFAM" id="SSF52540">
    <property type="entry name" value="P-loop containing nucleoside triphosphate hydrolases"/>
    <property type="match status" value="1"/>
</dbReference>
<dbReference type="SUPFAM" id="SSF50447">
    <property type="entry name" value="Translation proteins"/>
    <property type="match status" value="2"/>
</dbReference>
<dbReference type="PROSITE" id="PS51722">
    <property type="entry name" value="G_TR_2"/>
    <property type="match status" value="1"/>
</dbReference>
<dbReference type="PROSITE" id="PS01176">
    <property type="entry name" value="IF2"/>
    <property type="match status" value="1"/>
</dbReference>
<sequence>MSDKPRRDTGSTGTGSGRSTGQSGSNRAVGAPNPGTGRSPNASTGGNRSAGNQAGNSGRPASAGRNQATTPAPNRNTPPAGARQGGAANARTGTPPVARGGGGGVTPPTGRGGNNPRAARNQPRSRQQPEEREREHVLRRPPPQPAARPVVRPRGPVALPPVMTVRELSEATGIGAADILKAMLKAGMLANINQQIDYETAALIMADFGIETTEDVPEQMAGIVEDVKEVLRAQPPEEMRPRPPVVTIMGHVDHGKTKLLDAIRSTRVAEGEAGGITQHIGAYQIEVNHRKITFLDTPGHEAFTAMRARGAQVTDIVVLVVAADDGVKPQTEEAIAHVKAAGVPMIVAINKIDLPTANPDRIKQQLANVGVIVEEYGGNVPCVHVSARQKINIDGLLEMILLVADLEDLRANPNAPAVGTIIEAKLDKSRGPVATVLIQNGTLHLEDNVLVGCVAGKIKSMFSDSGKRLRHAEPSTPVEIVGLEGVPQAGDILQVMDDLVVAREIALQRQRQQRAEVMAAAARGTSLEELFGKVKQGQVKELNLILKADVQGSLDAIAHLIEQLNQSQQAVQTRIIHRGVGAITEGDVNLALASHAIIIGFNARPDPAARRHAEQHGIDIRFYNIIYQLQDDLKKAMAGMLAPTVKEVVEGYAEVRNTFRLPTREVVAGVYVSDGKITRTGQNVRVLRRGVVIHDGKISSLKRFKDDVREVTAGYECGLIVEGFNDIEVGDALEFYRQETVAASL</sequence>